<keyword id="KW-0963">Cytoplasm</keyword>
<keyword id="KW-0501">Molybdenum cofactor biosynthesis</keyword>
<keyword id="KW-1185">Reference proteome</keyword>
<keyword id="KW-0808">Transferase</keyword>
<sequence>MDHIQLLNDKIDINLIHQLLIDQSCGACSVFLGTTRDNFEGKNVISLEYEAYENMALKEMGKICTDLRVRWPSLKHIVIYHRLGIVPVSEVSVVIAASAPHRVAALESVNFAIDQLKSRVPIWKKEVYEKDLIGEWKANVECPWPQYSKTSLRTFEFFSCKIDQKTENIPDKLVQIRVDDSELNRRVKCFLKRKRDEINLYNIHDFKQLSTNTELADSSESEVKYSCARTQSSLVKQQQSKSHLKVRREIDNSGPHVRPNYSSQLNKLTTAQHYKNDSFENSMLRNSRLRNIEEYMCVTSDGDNILNRIKNIENKILLLESISPEYKYFVSIFIIVYQMFILSNS</sequence>
<proteinExistence type="inferred from homology"/>
<accession>B4LVP8</accession>
<dbReference type="EC" id="2.8.1.12" evidence="2"/>
<dbReference type="EMBL" id="CH940650">
    <property type="protein sequence ID" value="EDW66471.1"/>
    <property type="molecule type" value="Genomic_DNA"/>
</dbReference>
<dbReference type="RefSeq" id="XP_002052951.2">
    <property type="nucleotide sequence ID" value="XM_002052915.2"/>
</dbReference>
<dbReference type="SMR" id="B4LVP8"/>
<dbReference type="FunCoup" id="B4LVP8">
    <property type="interactions" value="609"/>
</dbReference>
<dbReference type="STRING" id="7244.B4LVP8"/>
<dbReference type="GeneID" id="6630856"/>
<dbReference type="KEGG" id="dvi:6630856"/>
<dbReference type="CTD" id="43017"/>
<dbReference type="eggNOG" id="KOG3307">
    <property type="taxonomic scope" value="Eukaryota"/>
</dbReference>
<dbReference type="HOGENOM" id="CLU_045449_0_0_1"/>
<dbReference type="InParanoid" id="B4LVP8"/>
<dbReference type="OMA" id="KIRSQWN"/>
<dbReference type="OrthoDB" id="5531344at2759"/>
<dbReference type="PhylomeDB" id="B4LVP8"/>
<dbReference type="UniPathway" id="UPA00344"/>
<dbReference type="Proteomes" id="UP000008792">
    <property type="component" value="Unassembled WGS sequence"/>
</dbReference>
<dbReference type="GO" id="GO:0140672">
    <property type="term" value="C:ATAC complex"/>
    <property type="evidence" value="ECO:0007669"/>
    <property type="project" value="EnsemblMetazoa"/>
</dbReference>
<dbReference type="GO" id="GO:0005829">
    <property type="term" value="C:cytosol"/>
    <property type="evidence" value="ECO:0000250"/>
    <property type="project" value="UniProtKB"/>
</dbReference>
<dbReference type="GO" id="GO:1990140">
    <property type="term" value="C:molybdopterin synthase complex"/>
    <property type="evidence" value="ECO:0000250"/>
    <property type="project" value="UniProtKB"/>
</dbReference>
<dbReference type="GO" id="GO:0005700">
    <property type="term" value="C:polytene chromosome"/>
    <property type="evidence" value="ECO:0007669"/>
    <property type="project" value="EnsemblMetazoa"/>
</dbReference>
<dbReference type="GO" id="GO:0030366">
    <property type="term" value="F:molybdopterin synthase activity"/>
    <property type="evidence" value="ECO:0007669"/>
    <property type="project" value="UniProtKB-UniRule"/>
</dbReference>
<dbReference type="GO" id="GO:0006338">
    <property type="term" value="P:chromatin remodeling"/>
    <property type="evidence" value="ECO:0007669"/>
    <property type="project" value="EnsemblMetazoa"/>
</dbReference>
<dbReference type="GO" id="GO:0006777">
    <property type="term" value="P:Mo-molybdopterin cofactor biosynthetic process"/>
    <property type="evidence" value="ECO:0000250"/>
    <property type="project" value="UniProtKB"/>
</dbReference>
<dbReference type="CDD" id="cd00756">
    <property type="entry name" value="MoaE"/>
    <property type="match status" value="1"/>
</dbReference>
<dbReference type="FunFam" id="3.90.1170.40:FF:000002">
    <property type="entry name" value="Molybdopterin synthase catalytic subunit"/>
    <property type="match status" value="1"/>
</dbReference>
<dbReference type="Gene3D" id="3.90.1170.40">
    <property type="entry name" value="Molybdopterin biosynthesis MoaE subunit"/>
    <property type="match status" value="1"/>
</dbReference>
<dbReference type="HAMAP" id="MF_03052">
    <property type="entry name" value="MOC2B"/>
    <property type="match status" value="1"/>
</dbReference>
<dbReference type="InterPro" id="IPR036563">
    <property type="entry name" value="MoaE_sf"/>
</dbReference>
<dbReference type="InterPro" id="IPR028888">
    <property type="entry name" value="MOCS2B_euk"/>
</dbReference>
<dbReference type="InterPro" id="IPR003448">
    <property type="entry name" value="Mopterin_biosynth_MoaE"/>
</dbReference>
<dbReference type="PANTHER" id="PTHR23404">
    <property type="entry name" value="MOLYBDOPTERIN SYNTHASE RELATED"/>
    <property type="match status" value="1"/>
</dbReference>
<dbReference type="Pfam" id="PF02391">
    <property type="entry name" value="MoaE"/>
    <property type="match status" value="1"/>
</dbReference>
<dbReference type="SUPFAM" id="SSF54690">
    <property type="entry name" value="Molybdopterin synthase subunit MoaE"/>
    <property type="match status" value="1"/>
</dbReference>
<organism>
    <name type="scientific">Drosophila virilis</name>
    <name type="common">Fruit fly</name>
    <dbReference type="NCBI Taxonomy" id="7244"/>
    <lineage>
        <taxon>Eukaryota</taxon>
        <taxon>Metazoa</taxon>
        <taxon>Ecdysozoa</taxon>
        <taxon>Arthropoda</taxon>
        <taxon>Hexapoda</taxon>
        <taxon>Insecta</taxon>
        <taxon>Pterygota</taxon>
        <taxon>Neoptera</taxon>
        <taxon>Endopterygota</taxon>
        <taxon>Diptera</taxon>
        <taxon>Brachycera</taxon>
        <taxon>Muscomorpha</taxon>
        <taxon>Ephydroidea</taxon>
        <taxon>Drosophilidae</taxon>
        <taxon>Drosophila</taxon>
    </lineage>
</organism>
<protein>
    <recommendedName>
        <fullName evidence="2">Molybdopterin synthase catalytic subunit</fullName>
        <ecNumber evidence="2">2.8.1.12</ecNumber>
    </recommendedName>
    <alternativeName>
        <fullName evidence="2">Molybdenum cofactor synthesis protein 2 large subunit</fullName>
    </alternativeName>
    <alternativeName>
        <fullName evidence="2">Molybdenum cofactor synthesis protein 2B</fullName>
        <shortName evidence="2">MOCS2B</shortName>
    </alternativeName>
</protein>
<comment type="function">
    <text evidence="2">Catalytic subunit of the molybdopterin synthase complex, a complex that catalyzes the conversion of precursor Z into molybdopterin. Acts by mediating the incorporation of 2 sulfur atoms from thiocarboxylated Mocs2A into precursor Z to generate a dithiolene group.</text>
</comment>
<comment type="catalytic activity">
    <reaction evidence="2">
        <text>2 [molybdopterin-synthase sulfur-carrier protein]-C-terminal-Gly-aminoethanethioate + cyclic pyranopterin phosphate + H2O = molybdopterin + 2 [molybdopterin-synthase sulfur-carrier protein]-C-terminal Gly-Gly + 2 H(+)</text>
        <dbReference type="Rhea" id="RHEA:26333"/>
        <dbReference type="Rhea" id="RHEA-COMP:12202"/>
        <dbReference type="Rhea" id="RHEA-COMP:19907"/>
        <dbReference type="ChEBI" id="CHEBI:15377"/>
        <dbReference type="ChEBI" id="CHEBI:15378"/>
        <dbReference type="ChEBI" id="CHEBI:58698"/>
        <dbReference type="ChEBI" id="CHEBI:59648"/>
        <dbReference type="ChEBI" id="CHEBI:90778"/>
        <dbReference type="ChEBI" id="CHEBI:232372"/>
        <dbReference type="EC" id="2.8.1.12"/>
    </reaction>
</comment>
<comment type="pathway">
    <text evidence="2">Cofactor biosynthesis; molybdopterin biosynthesis.</text>
</comment>
<comment type="subunit">
    <text evidence="2">Heterotetramer; composed of 2 small (Mocs2A) and 2 large (Mocs2B) subunits.</text>
</comment>
<comment type="subcellular location">
    <subcellularLocation>
        <location evidence="2">Cytoplasm</location>
    </subcellularLocation>
</comment>
<comment type="miscellaneous">
    <text>This protein is produced by a bicistronic gene which also produces the small subunit (Mocs2A).</text>
</comment>
<comment type="similarity">
    <text evidence="2">Belongs to the MoaE family. MOCS2B subfamily.</text>
</comment>
<feature type="chain" id="PRO_0000369342" description="Molybdopterin synthase catalytic subunit">
    <location>
        <begin position="1"/>
        <end position="345"/>
    </location>
</feature>
<feature type="binding site" evidence="2">
    <location>
        <begin position="101"/>
        <end position="102"/>
    </location>
    <ligand>
        <name>substrate</name>
    </ligand>
</feature>
<feature type="binding site" evidence="2">
    <location>
        <position position="117"/>
    </location>
    <ligand>
        <name>substrate</name>
    </ligand>
</feature>
<feature type="binding site" evidence="2">
    <location>
        <begin position="124"/>
        <end position="126"/>
    </location>
    <ligand>
        <name>substrate</name>
    </ligand>
</feature>
<evidence type="ECO:0000250" key="1">
    <source>
        <dbReference type="UniProtKB" id="Q9VBX2"/>
    </source>
</evidence>
<evidence type="ECO:0000255" key="2">
    <source>
        <dbReference type="HAMAP-Rule" id="MF_03052"/>
    </source>
</evidence>
<name>MOC2B_DROVI</name>
<gene>
    <name evidence="1" type="primary">Mocs2B</name>
    <name evidence="2" type="synonym">Mocs2</name>
    <name type="ORF">GJ23609</name>
</gene>
<reference key="1">
    <citation type="journal article" date="2007" name="Nature">
        <title>Evolution of genes and genomes on the Drosophila phylogeny.</title>
        <authorList>
            <consortium name="Drosophila 12 genomes consortium"/>
        </authorList>
    </citation>
    <scope>NUCLEOTIDE SEQUENCE [LARGE SCALE GENOMIC DNA]</scope>
    <source>
        <strain>Tucson 15010-1051.87</strain>
    </source>
</reference>